<reference key="1">
    <citation type="journal article" date="2006" name="PLoS Genet.">
        <title>Genome sequence of Rickettsia bellii illuminates the role of amoebae in gene exchanges between intracellular pathogens.</title>
        <authorList>
            <person name="Ogata H."/>
            <person name="La Scola B."/>
            <person name="Audic S."/>
            <person name="Renesto P."/>
            <person name="Blanc G."/>
            <person name="Robert C."/>
            <person name="Fournier P.-E."/>
            <person name="Claverie J.-M."/>
            <person name="Raoult D."/>
        </authorList>
    </citation>
    <scope>NUCLEOTIDE SEQUENCE [LARGE SCALE GENOMIC DNA]</scope>
    <source>
        <strain>RML369-C</strain>
    </source>
</reference>
<proteinExistence type="inferred from homology"/>
<protein>
    <recommendedName>
        <fullName evidence="1">Glycine--tRNA ligase alpha subunit</fullName>
        <ecNumber evidence="1">6.1.1.14</ecNumber>
    </recommendedName>
    <alternativeName>
        <fullName evidence="1">Glycyl-tRNA synthetase alpha subunit</fullName>
        <shortName evidence="1">GlyRS</shortName>
    </alternativeName>
</protein>
<sequence>MKKLSFQQIILTLQNYWQDYGCAILQPYDAHVGAGTFHPATVLRCLGSKPWSVAYVQPSRRPGDSRYGMHPNRMQHYYQFQVILKPSPDNIQELYLKSLECLGIDLKAHDIRFVEDDWKSPTLGAAGLGWEVWCDGMEVSQFTYMQQIGGIECKLVAGEITYGLERLALYIQGIDEVKELDWNGQTGEKALKYGEVDFEAERQFSKFNLEFADSEMLLRHFKDSEEQCERLVEANLPLPAYDYCLNASHYFNLLNSRGIISVTERASYVLKVRHLAKICCMKWLEMSGE</sequence>
<accession>Q1RGS3</accession>
<gene>
    <name evidence="1" type="primary">glyQ</name>
    <name type="ordered locus">RBE_1360</name>
</gene>
<organism>
    <name type="scientific">Rickettsia bellii (strain RML369-C)</name>
    <dbReference type="NCBI Taxonomy" id="336407"/>
    <lineage>
        <taxon>Bacteria</taxon>
        <taxon>Pseudomonadati</taxon>
        <taxon>Pseudomonadota</taxon>
        <taxon>Alphaproteobacteria</taxon>
        <taxon>Rickettsiales</taxon>
        <taxon>Rickettsiaceae</taxon>
        <taxon>Rickettsieae</taxon>
        <taxon>Rickettsia</taxon>
        <taxon>belli group</taxon>
    </lineage>
</organism>
<feature type="chain" id="PRO_0000274894" description="Glycine--tRNA ligase alpha subunit">
    <location>
        <begin position="1"/>
        <end position="289"/>
    </location>
</feature>
<comment type="catalytic activity">
    <reaction evidence="1">
        <text>tRNA(Gly) + glycine + ATP = glycyl-tRNA(Gly) + AMP + diphosphate</text>
        <dbReference type="Rhea" id="RHEA:16013"/>
        <dbReference type="Rhea" id="RHEA-COMP:9664"/>
        <dbReference type="Rhea" id="RHEA-COMP:9683"/>
        <dbReference type="ChEBI" id="CHEBI:30616"/>
        <dbReference type="ChEBI" id="CHEBI:33019"/>
        <dbReference type="ChEBI" id="CHEBI:57305"/>
        <dbReference type="ChEBI" id="CHEBI:78442"/>
        <dbReference type="ChEBI" id="CHEBI:78522"/>
        <dbReference type="ChEBI" id="CHEBI:456215"/>
        <dbReference type="EC" id="6.1.1.14"/>
    </reaction>
</comment>
<comment type="subunit">
    <text evidence="1">Tetramer of two alpha and two beta subunits.</text>
</comment>
<comment type="subcellular location">
    <subcellularLocation>
        <location evidence="1">Cytoplasm</location>
    </subcellularLocation>
</comment>
<comment type="similarity">
    <text evidence="1">Belongs to the class-II aminoacyl-tRNA synthetase family.</text>
</comment>
<dbReference type="EC" id="6.1.1.14" evidence="1"/>
<dbReference type="EMBL" id="CP000087">
    <property type="protein sequence ID" value="ABE05441.1"/>
    <property type="molecule type" value="Genomic_DNA"/>
</dbReference>
<dbReference type="RefSeq" id="WP_011478010.1">
    <property type="nucleotide sequence ID" value="NC_007940.1"/>
</dbReference>
<dbReference type="SMR" id="Q1RGS3"/>
<dbReference type="KEGG" id="rbe:RBE_1360"/>
<dbReference type="eggNOG" id="COG0752">
    <property type="taxonomic scope" value="Bacteria"/>
</dbReference>
<dbReference type="HOGENOM" id="CLU_057066_1_0_5"/>
<dbReference type="OrthoDB" id="9802183at2"/>
<dbReference type="Proteomes" id="UP000001951">
    <property type="component" value="Chromosome"/>
</dbReference>
<dbReference type="GO" id="GO:0005829">
    <property type="term" value="C:cytosol"/>
    <property type="evidence" value="ECO:0007669"/>
    <property type="project" value="TreeGrafter"/>
</dbReference>
<dbReference type="GO" id="GO:0005524">
    <property type="term" value="F:ATP binding"/>
    <property type="evidence" value="ECO:0007669"/>
    <property type="project" value="UniProtKB-UniRule"/>
</dbReference>
<dbReference type="GO" id="GO:0004820">
    <property type="term" value="F:glycine-tRNA ligase activity"/>
    <property type="evidence" value="ECO:0007669"/>
    <property type="project" value="UniProtKB-UniRule"/>
</dbReference>
<dbReference type="GO" id="GO:0006426">
    <property type="term" value="P:glycyl-tRNA aminoacylation"/>
    <property type="evidence" value="ECO:0007669"/>
    <property type="project" value="UniProtKB-UniRule"/>
</dbReference>
<dbReference type="FunFam" id="3.30.930.10:FF:000006">
    <property type="entry name" value="Glycine--tRNA ligase alpha subunit"/>
    <property type="match status" value="1"/>
</dbReference>
<dbReference type="Gene3D" id="3.30.930.10">
    <property type="entry name" value="Bira Bifunctional Protein, Domain 2"/>
    <property type="match status" value="1"/>
</dbReference>
<dbReference type="Gene3D" id="1.20.58.180">
    <property type="entry name" value="Class II aaRS and biotin synthetases, domain 2"/>
    <property type="match status" value="1"/>
</dbReference>
<dbReference type="HAMAP" id="MF_00254">
    <property type="entry name" value="Gly_tRNA_synth_alpha"/>
    <property type="match status" value="1"/>
</dbReference>
<dbReference type="InterPro" id="IPR045864">
    <property type="entry name" value="aa-tRNA-synth_II/BPL/LPL"/>
</dbReference>
<dbReference type="InterPro" id="IPR006194">
    <property type="entry name" value="Gly-tRNA-synth_heterodimer"/>
</dbReference>
<dbReference type="InterPro" id="IPR002310">
    <property type="entry name" value="Gly-tRNA_ligase_asu"/>
</dbReference>
<dbReference type="NCBIfam" id="TIGR00388">
    <property type="entry name" value="glyQ"/>
    <property type="match status" value="1"/>
</dbReference>
<dbReference type="NCBIfam" id="NF006827">
    <property type="entry name" value="PRK09348.1"/>
    <property type="match status" value="1"/>
</dbReference>
<dbReference type="PANTHER" id="PTHR30075:SF2">
    <property type="entry name" value="GLYCINE--TRNA LIGASE, CHLOROPLASTIC_MITOCHONDRIAL 2"/>
    <property type="match status" value="1"/>
</dbReference>
<dbReference type="PANTHER" id="PTHR30075">
    <property type="entry name" value="GLYCYL-TRNA SYNTHETASE"/>
    <property type="match status" value="1"/>
</dbReference>
<dbReference type="Pfam" id="PF02091">
    <property type="entry name" value="tRNA-synt_2e"/>
    <property type="match status" value="1"/>
</dbReference>
<dbReference type="PRINTS" id="PR01044">
    <property type="entry name" value="TRNASYNTHGA"/>
</dbReference>
<dbReference type="SUPFAM" id="SSF55681">
    <property type="entry name" value="Class II aaRS and biotin synthetases"/>
    <property type="match status" value="1"/>
</dbReference>
<dbReference type="PROSITE" id="PS50861">
    <property type="entry name" value="AA_TRNA_LIGASE_II_GLYAB"/>
    <property type="match status" value="1"/>
</dbReference>
<name>SYGA_RICBR</name>
<evidence type="ECO:0000255" key="1">
    <source>
        <dbReference type="HAMAP-Rule" id="MF_00254"/>
    </source>
</evidence>
<keyword id="KW-0030">Aminoacyl-tRNA synthetase</keyword>
<keyword id="KW-0067">ATP-binding</keyword>
<keyword id="KW-0963">Cytoplasm</keyword>
<keyword id="KW-0436">Ligase</keyword>
<keyword id="KW-0547">Nucleotide-binding</keyword>
<keyword id="KW-0648">Protein biosynthesis</keyword>